<accession>B5XNQ6</accession>
<reference key="1">
    <citation type="journal article" date="2008" name="PLoS Genet.">
        <title>Complete genome sequence of the N2-fixing broad host range endophyte Klebsiella pneumoniae 342 and virulence predictions verified in mice.</title>
        <authorList>
            <person name="Fouts D.E."/>
            <person name="Tyler H.L."/>
            <person name="DeBoy R.T."/>
            <person name="Daugherty S."/>
            <person name="Ren Q."/>
            <person name="Badger J.H."/>
            <person name="Durkin A.S."/>
            <person name="Huot H."/>
            <person name="Shrivastava S."/>
            <person name="Kothari S."/>
            <person name="Dodson R.J."/>
            <person name="Mohamoud Y."/>
            <person name="Khouri H."/>
            <person name="Roesch L.F.W."/>
            <person name="Krogfelt K.A."/>
            <person name="Struve C."/>
            <person name="Triplett E.W."/>
            <person name="Methe B.A."/>
        </authorList>
    </citation>
    <scope>NUCLEOTIDE SEQUENCE [LARGE SCALE GENOMIC DNA]</scope>
    <source>
        <strain>342</strain>
    </source>
</reference>
<organism>
    <name type="scientific">Klebsiella pneumoniae (strain 342)</name>
    <dbReference type="NCBI Taxonomy" id="507522"/>
    <lineage>
        <taxon>Bacteria</taxon>
        <taxon>Pseudomonadati</taxon>
        <taxon>Pseudomonadota</taxon>
        <taxon>Gammaproteobacteria</taxon>
        <taxon>Enterobacterales</taxon>
        <taxon>Enterobacteriaceae</taxon>
        <taxon>Klebsiella/Raoultella group</taxon>
        <taxon>Klebsiella</taxon>
        <taxon>Klebsiella pneumoniae complex</taxon>
    </lineage>
</organism>
<gene>
    <name evidence="2" type="primary">hda</name>
    <name type="ordered locus">KPK_1317</name>
</gene>
<keyword id="KW-0235">DNA replication</keyword>
<keyword id="KW-0236">DNA replication inhibitor</keyword>
<proteinExistence type="inferred from homology"/>
<comment type="function">
    <text evidence="1">Mediates the interaction of DNA replication initiator protein DnaA with DNA polymerase subunit beta sliding clamp (dnaN). Stimulates hydrolysis of ATP-DnaA to ADP-DnaA, rendering DnaA inactive for reinitiation, a process called regulatory inhibition of DnaA or RIDA (By similarity).</text>
</comment>
<comment type="subunit">
    <text evidence="2">The active form seems to be an ADP-bound monomer. Forms the RIDA complex (regulatory inactivation of DnaA) of ATP-DnaA, ADP-Hda and the DNA-loaded beta sliding clamp (dnaN).</text>
</comment>
<comment type="similarity">
    <text evidence="2">Belongs to the DnaA family. HdA subfamily.</text>
</comment>
<feature type="chain" id="PRO_0000389449" description="DnaA regulatory inactivator Hda">
    <location>
        <begin position="1"/>
        <end position="225"/>
    </location>
</feature>
<dbReference type="EMBL" id="CP000964">
    <property type="protein sequence ID" value="ACI11298.1"/>
    <property type="molecule type" value="Genomic_DNA"/>
</dbReference>
<dbReference type="SMR" id="B5XNQ6"/>
<dbReference type="KEGG" id="kpe:KPK_1317"/>
<dbReference type="HOGENOM" id="CLU_072265_1_1_6"/>
<dbReference type="Proteomes" id="UP000001734">
    <property type="component" value="Chromosome"/>
</dbReference>
<dbReference type="GO" id="GO:0006270">
    <property type="term" value="P:DNA replication initiation"/>
    <property type="evidence" value="ECO:0007669"/>
    <property type="project" value="TreeGrafter"/>
</dbReference>
<dbReference type="GO" id="GO:0032297">
    <property type="term" value="P:negative regulation of DNA-templated DNA replication initiation"/>
    <property type="evidence" value="ECO:0007669"/>
    <property type="project" value="InterPro"/>
</dbReference>
<dbReference type="FunFam" id="1.10.8.60:FF:000024">
    <property type="entry name" value="DnaA regulatory inactivator Hda"/>
    <property type="match status" value="1"/>
</dbReference>
<dbReference type="FunFam" id="3.40.50.300:FF:000452">
    <property type="entry name" value="DnaA regulatory inactivator Hda"/>
    <property type="match status" value="1"/>
</dbReference>
<dbReference type="Gene3D" id="1.10.8.60">
    <property type="match status" value="1"/>
</dbReference>
<dbReference type="Gene3D" id="3.40.50.300">
    <property type="entry name" value="P-loop containing nucleotide triphosphate hydrolases"/>
    <property type="match status" value="1"/>
</dbReference>
<dbReference type="HAMAP" id="MF_01158">
    <property type="entry name" value="Hda"/>
    <property type="match status" value="1"/>
</dbReference>
<dbReference type="InterPro" id="IPR020591">
    <property type="entry name" value="Chromosome_initiator_DnaA-like"/>
</dbReference>
<dbReference type="InterPro" id="IPR013317">
    <property type="entry name" value="DnaA_dom"/>
</dbReference>
<dbReference type="InterPro" id="IPR017788">
    <property type="entry name" value="Hda"/>
</dbReference>
<dbReference type="InterPro" id="IPR022864">
    <property type="entry name" value="Hda_Enterobact"/>
</dbReference>
<dbReference type="InterPro" id="IPR055199">
    <property type="entry name" value="Hda_lid"/>
</dbReference>
<dbReference type="InterPro" id="IPR027417">
    <property type="entry name" value="P-loop_NTPase"/>
</dbReference>
<dbReference type="NCBIfam" id="TIGR03420">
    <property type="entry name" value="DnaA_homol_Hda"/>
    <property type="match status" value="1"/>
</dbReference>
<dbReference type="NCBIfam" id="NF005982">
    <property type="entry name" value="PRK08084.1"/>
    <property type="match status" value="1"/>
</dbReference>
<dbReference type="PANTHER" id="PTHR30050">
    <property type="entry name" value="CHROMOSOMAL REPLICATION INITIATOR PROTEIN DNAA"/>
    <property type="match status" value="1"/>
</dbReference>
<dbReference type="PANTHER" id="PTHR30050:SF5">
    <property type="entry name" value="DNAA REGULATORY INACTIVATOR HDA"/>
    <property type="match status" value="1"/>
</dbReference>
<dbReference type="Pfam" id="PF00308">
    <property type="entry name" value="Bac_DnaA"/>
    <property type="match status" value="1"/>
</dbReference>
<dbReference type="Pfam" id="PF22688">
    <property type="entry name" value="Hda_lid"/>
    <property type="match status" value="1"/>
</dbReference>
<dbReference type="PRINTS" id="PR00051">
    <property type="entry name" value="DNAA"/>
</dbReference>
<dbReference type="SUPFAM" id="SSF52540">
    <property type="entry name" value="P-loop containing nucleoside triphosphate hydrolases"/>
    <property type="match status" value="1"/>
</dbReference>
<protein>
    <recommendedName>
        <fullName evidence="2">DnaA regulatory inactivator Hda</fullName>
    </recommendedName>
</protein>
<sequence>MPLYLPDDETFASFWPGDNPSLLAALQNVLRQEHSGYIYIWSREGAGRSHLLHAACAELSQRGDAVGYVPLDKRTWFVPEVLEGMEQLALVCIDNIECVAGDEPWEMAIFNLYNRILESGKTRLLITGDRPPRQLNLGLPDLASRLDWGQIYKLQPLSDEDKLQALQLRARLRGFEMPEDVCRFLLKRLDREMRSLFMTLDQLDHASITAQRKLTIPFVKEILKL</sequence>
<name>HDA_KLEP3</name>
<evidence type="ECO:0000250" key="1"/>
<evidence type="ECO:0000255" key="2">
    <source>
        <dbReference type="HAMAP-Rule" id="MF_01158"/>
    </source>
</evidence>